<evidence type="ECO:0000250" key="1"/>
<evidence type="ECO:0000255" key="2"/>
<evidence type="ECO:0000305" key="3"/>
<comment type="subcellular location">
    <subcellularLocation>
        <location evidence="1">Secreted</location>
    </subcellularLocation>
</comment>
<comment type="tissue specificity">
    <text>Expressed by the venom duct.</text>
</comment>
<comment type="miscellaneous">
    <text>The mature peptide does not contain cysteine residues.</text>
</comment>
<comment type="similarity">
    <text evidence="3">Belongs to the conotoxin T superfamily.</text>
</comment>
<keyword id="KW-0027">Amidation</keyword>
<keyword id="KW-0165">Cleavage on pair of basic residues</keyword>
<keyword id="KW-0528">Neurotoxin</keyword>
<keyword id="KW-0964">Secreted</keyword>
<keyword id="KW-0732">Signal</keyword>
<keyword id="KW-0800">Toxin</keyword>
<protein>
    <recommendedName>
        <fullName>Conotoxin VnMLCL-033</fullName>
    </recommendedName>
</protein>
<accession>Q9BPD1</accession>
<organism>
    <name type="scientific">Conus ventricosus</name>
    <name type="common">Mediterranean cone</name>
    <dbReference type="NCBI Taxonomy" id="117992"/>
    <lineage>
        <taxon>Eukaryota</taxon>
        <taxon>Metazoa</taxon>
        <taxon>Spiralia</taxon>
        <taxon>Lophotrochozoa</taxon>
        <taxon>Mollusca</taxon>
        <taxon>Gastropoda</taxon>
        <taxon>Caenogastropoda</taxon>
        <taxon>Neogastropoda</taxon>
        <taxon>Conoidea</taxon>
        <taxon>Conidae</taxon>
        <taxon>Conus</taxon>
        <taxon>Lautoconus</taxon>
    </lineage>
</organism>
<reference key="1">
    <citation type="journal article" date="2001" name="Mol. Biol. Evol.">
        <title>Mechanisms for evolving hypervariability: the case of conopeptides.</title>
        <authorList>
            <person name="Conticello S.G."/>
            <person name="Gilad Y."/>
            <person name="Avidan N."/>
            <person name="Ben-Asher E."/>
            <person name="Levy Z."/>
            <person name="Fainzilber M."/>
        </authorList>
    </citation>
    <scope>NUCLEOTIDE SEQUENCE [MRNA]</scope>
    <source>
        <tissue>Venom duct</tissue>
    </source>
</reference>
<proteinExistence type="evidence at transcript level"/>
<dbReference type="EMBL" id="AF215003">
    <property type="protein sequence ID" value="AAG60431.1"/>
    <property type="molecule type" value="mRNA"/>
</dbReference>
<dbReference type="ConoServer" id="690">
    <property type="toxin name" value="VnMLCL-033"/>
</dbReference>
<dbReference type="GO" id="GO:0005576">
    <property type="term" value="C:extracellular region"/>
    <property type="evidence" value="ECO:0007669"/>
    <property type="project" value="UniProtKB-SubCell"/>
</dbReference>
<dbReference type="GO" id="GO:0090729">
    <property type="term" value="F:toxin activity"/>
    <property type="evidence" value="ECO:0007669"/>
    <property type="project" value="UniProtKB-KW"/>
</dbReference>
<name>CT0C1_CONVE</name>
<feature type="signal peptide" evidence="2">
    <location>
        <begin position="1"/>
        <end position="19"/>
    </location>
</feature>
<feature type="propeptide" id="PRO_0000404983" evidence="2">
    <location>
        <begin position="20"/>
        <end position="43"/>
    </location>
</feature>
<feature type="peptide" id="PRO_0000404984" description="Conotoxin VnMLCL-033" evidence="2">
    <location>
        <begin position="46"/>
        <end position="63"/>
    </location>
</feature>
<feature type="modified residue" description="Isoleucine amide" evidence="1">
    <location>
        <position position="63"/>
    </location>
</feature>
<sequence length="64" mass="6786">MLCLPVFIILLLLASPAAPNPLQTRIQSNLIRAGPEDANIKTDKRVISGLLASILVPLIDAIIG</sequence>